<evidence type="ECO:0000255" key="1">
    <source>
        <dbReference type="HAMAP-Rule" id="MF_00639"/>
    </source>
</evidence>
<sequence>MKVISNFQNKKILILGLAKSGEAAAKLLTKLGALVTVNDSKPFDQNPAAQALLEEGIKVICGSHPVELLDENFEYMVKNPGIPYDNPMVKRALAKEIPILTEVELAYFVSEAPIIGITGSNGKTTTTTMIADVLNAGGQSALLSGNIGYPASKVVQKAIAGDTLVMELSSFQLVGVNAFRPHIAVITNLMPTHLDYHGSFEDYVAAKWMIQAQMTESDYLILNANQEISATLAKTTKATVIPFSTQKVVDGAYLNDGILYFKEQAIIAATDLGVPGSHNIENALATIAVAKLSGIADDIIAQCLSHFGGVKHRLQRVGQIKDITFYNDSKSTNILATKKALSGFDNSRLILIAGGLDRGNEFDDLVPDLLGLKQMIILGESAERMKRAANKAEVSYLEARNVAEATELAFKLAQTGDTILLSPANASWDMYPNFEVRGDEFLATFDCLRGDA</sequence>
<proteinExistence type="inferred from homology"/>
<gene>
    <name evidence="1" type="primary">murD</name>
    <name type="ordered locus">MGAS2096_Spy1272</name>
</gene>
<feature type="chain" id="PRO_0000257247" description="UDP-N-acetylmuramoylalanine--D-glutamate ligase">
    <location>
        <begin position="1"/>
        <end position="452"/>
    </location>
</feature>
<feature type="binding site" evidence="1">
    <location>
        <begin position="119"/>
        <end position="125"/>
    </location>
    <ligand>
        <name>ATP</name>
        <dbReference type="ChEBI" id="CHEBI:30616"/>
    </ligand>
</feature>
<accession>Q1JAT4</accession>
<reference key="1">
    <citation type="journal article" date="2006" name="Proc. Natl. Acad. Sci. U.S.A.">
        <title>Molecular genetic anatomy of inter- and intraserotype variation in the human bacterial pathogen group A Streptococcus.</title>
        <authorList>
            <person name="Beres S.B."/>
            <person name="Richter E.W."/>
            <person name="Nagiec M.J."/>
            <person name="Sumby P."/>
            <person name="Porcella S.F."/>
            <person name="DeLeo F.R."/>
            <person name="Musser J.M."/>
        </authorList>
    </citation>
    <scope>NUCLEOTIDE SEQUENCE [LARGE SCALE GENOMIC DNA]</scope>
    <source>
        <strain>MGAS2096</strain>
    </source>
</reference>
<comment type="function">
    <text evidence="1">Cell wall formation. Catalyzes the addition of glutamate to the nucleotide precursor UDP-N-acetylmuramoyl-L-alanine (UMA).</text>
</comment>
<comment type="catalytic activity">
    <reaction evidence="1">
        <text>UDP-N-acetyl-alpha-D-muramoyl-L-alanine + D-glutamate + ATP = UDP-N-acetyl-alpha-D-muramoyl-L-alanyl-D-glutamate + ADP + phosphate + H(+)</text>
        <dbReference type="Rhea" id="RHEA:16429"/>
        <dbReference type="ChEBI" id="CHEBI:15378"/>
        <dbReference type="ChEBI" id="CHEBI:29986"/>
        <dbReference type="ChEBI" id="CHEBI:30616"/>
        <dbReference type="ChEBI" id="CHEBI:43474"/>
        <dbReference type="ChEBI" id="CHEBI:83898"/>
        <dbReference type="ChEBI" id="CHEBI:83900"/>
        <dbReference type="ChEBI" id="CHEBI:456216"/>
        <dbReference type="EC" id="6.3.2.9"/>
    </reaction>
</comment>
<comment type="pathway">
    <text evidence="1">Cell wall biogenesis; peptidoglycan biosynthesis.</text>
</comment>
<comment type="subcellular location">
    <subcellularLocation>
        <location evidence="1">Cytoplasm</location>
    </subcellularLocation>
</comment>
<comment type="similarity">
    <text evidence="1">Belongs to the MurCDEF family.</text>
</comment>
<keyword id="KW-0067">ATP-binding</keyword>
<keyword id="KW-0131">Cell cycle</keyword>
<keyword id="KW-0132">Cell division</keyword>
<keyword id="KW-0133">Cell shape</keyword>
<keyword id="KW-0961">Cell wall biogenesis/degradation</keyword>
<keyword id="KW-0963">Cytoplasm</keyword>
<keyword id="KW-0436">Ligase</keyword>
<keyword id="KW-0547">Nucleotide-binding</keyword>
<keyword id="KW-0573">Peptidoglycan synthesis</keyword>
<dbReference type="EC" id="6.3.2.9" evidence="1"/>
<dbReference type="EMBL" id="CP000261">
    <property type="protein sequence ID" value="ABF36324.1"/>
    <property type="molecule type" value="Genomic_DNA"/>
</dbReference>
<dbReference type="SMR" id="Q1JAT4"/>
<dbReference type="KEGG" id="spj:MGAS2096_Spy1272"/>
<dbReference type="HOGENOM" id="CLU_032540_0_1_9"/>
<dbReference type="UniPathway" id="UPA00219"/>
<dbReference type="GO" id="GO:0005737">
    <property type="term" value="C:cytoplasm"/>
    <property type="evidence" value="ECO:0007669"/>
    <property type="project" value="UniProtKB-SubCell"/>
</dbReference>
<dbReference type="GO" id="GO:0005524">
    <property type="term" value="F:ATP binding"/>
    <property type="evidence" value="ECO:0007669"/>
    <property type="project" value="UniProtKB-UniRule"/>
</dbReference>
<dbReference type="GO" id="GO:0008764">
    <property type="term" value="F:UDP-N-acetylmuramoylalanine-D-glutamate ligase activity"/>
    <property type="evidence" value="ECO:0007669"/>
    <property type="project" value="UniProtKB-UniRule"/>
</dbReference>
<dbReference type="GO" id="GO:0051301">
    <property type="term" value="P:cell division"/>
    <property type="evidence" value="ECO:0007669"/>
    <property type="project" value="UniProtKB-KW"/>
</dbReference>
<dbReference type="GO" id="GO:0071555">
    <property type="term" value="P:cell wall organization"/>
    <property type="evidence" value="ECO:0007669"/>
    <property type="project" value="UniProtKB-KW"/>
</dbReference>
<dbReference type="GO" id="GO:0009252">
    <property type="term" value="P:peptidoglycan biosynthetic process"/>
    <property type="evidence" value="ECO:0007669"/>
    <property type="project" value="UniProtKB-UniRule"/>
</dbReference>
<dbReference type="GO" id="GO:0008360">
    <property type="term" value="P:regulation of cell shape"/>
    <property type="evidence" value="ECO:0007669"/>
    <property type="project" value="UniProtKB-KW"/>
</dbReference>
<dbReference type="Gene3D" id="3.90.190.20">
    <property type="entry name" value="Mur ligase, C-terminal domain"/>
    <property type="match status" value="1"/>
</dbReference>
<dbReference type="Gene3D" id="3.40.1190.10">
    <property type="entry name" value="Mur-like, catalytic domain"/>
    <property type="match status" value="1"/>
</dbReference>
<dbReference type="Gene3D" id="3.40.50.720">
    <property type="entry name" value="NAD(P)-binding Rossmann-like Domain"/>
    <property type="match status" value="1"/>
</dbReference>
<dbReference type="HAMAP" id="MF_00639">
    <property type="entry name" value="MurD"/>
    <property type="match status" value="1"/>
</dbReference>
<dbReference type="InterPro" id="IPR036565">
    <property type="entry name" value="Mur-like_cat_sf"/>
</dbReference>
<dbReference type="InterPro" id="IPR004101">
    <property type="entry name" value="Mur_ligase_C"/>
</dbReference>
<dbReference type="InterPro" id="IPR036615">
    <property type="entry name" value="Mur_ligase_C_dom_sf"/>
</dbReference>
<dbReference type="InterPro" id="IPR013221">
    <property type="entry name" value="Mur_ligase_cen"/>
</dbReference>
<dbReference type="InterPro" id="IPR005762">
    <property type="entry name" value="MurD"/>
</dbReference>
<dbReference type="NCBIfam" id="TIGR01087">
    <property type="entry name" value="murD"/>
    <property type="match status" value="1"/>
</dbReference>
<dbReference type="PANTHER" id="PTHR43692">
    <property type="entry name" value="UDP-N-ACETYLMURAMOYLALANINE--D-GLUTAMATE LIGASE"/>
    <property type="match status" value="1"/>
</dbReference>
<dbReference type="PANTHER" id="PTHR43692:SF1">
    <property type="entry name" value="UDP-N-ACETYLMURAMOYLALANINE--D-GLUTAMATE LIGASE"/>
    <property type="match status" value="1"/>
</dbReference>
<dbReference type="Pfam" id="PF02875">
    <property type="entry name" value="Mur_ligase_C"/>
    <property type="match status" value="1"/>
</dbReference>
<dbReference type="Pfam" id="PF08245">
    <property type="entry name" value="Mur_ligase_M"/>
    <property type="match status" value="1"/>
</dbReference>
<dbReference type="Pfam" id="PF21799">
    <property type="entry name" value="MurD-like_N"/>
    <property type="match status" value="1"/>
</dbReference>
<dbReference type="SUPFAM" id="SSF51984">
    <property type="entry name" value="MurCD N-terminal domain"/>
    <property type="match status" value="1"/>
</dbReference>
<dbReference type="SUPFAM" id="SSF53623">
    <property type="entry name" value="MurD-like peptide ligases, catalytic domain"/>
    <property type="match status" value="1"/>
</dbReference>
<dbReference type="SUPFAM" id="SSF53244">
    <property type="entry name" value="MurD-like peptide ligases, peptide-binding domain"/>
    <property type="match status" value="1"/>
</dbReference>
<name>MURD_STRPB</name>
<protein>
    <recommendedName>
        <fullName evidence="1">UDP-N-acetylmuramoylalanine--D-glutamate ligase</fullName>
        <ecNumber evidence="1">6.3.2.9</ecNumber>
    </recommendedName>
    <alternativeName>
        <fullName evidence="1">D-glutamic acid-adding enzyme</fullName>
    </alternativeName>
    <alternativeName>
        <fullName evidence="1">UDP-N-acetylmuramoyl-L-alanyl-D-glutamate synthetase</fullName>
    </alternativeName>
</protein>
<organism>
    <name type="scientific">Streptococcus pyogenes serotype M12 (strain MGAS2096)</name>
    <dbReference type="NCBI Taxonomy" id="370553"/>
    <lineage>
        <taxon>Bacteria</taxon>
        <taxon>Bacillati</taxon>
        <taxon>Bacillota</taxon>
        <taxon>Bacilli</taxon>
        <taxon>Lactobacillales</taxon>
        <taxon>Streptococcaceae</taxon>
        <taxon>Streptococcus</taxon>
    </lineage>
</organism>